<proteinExistence type="evidence at protein level"/>
<accession>P53008</accession>
<accession>D6VUB1</accession>
<organism>
    <name type="scientific">Saccharomyces cerevisiae (strain ATCC 204508 / S288c)</name>
    <name type="common">Baker's yeast</name>
    <dbReference type="NCBI Taxonomy" id="559292"/>
    <lineage>
        <taxon>Eukaryota</taxon>
        <taxon>Fungi</taxon>
        <taxon>Dikarya</taxon>
        <taxon>Ascomycota</taxon>
        <taxon>Saccharomycotina</taxon>
        <taxon>Saccharomycetes</taxon>
        <taxon>Saccharomycetales</taxon>
        <taxon>Saccharomycetaceae</taxon>
        <taxon>Saccharomyces</taxon>
    </lineage>
</organism>
<sequence length="833" mass="96507">MLISKSKMFKTFWILTSIVLLASATVDISKLQEFEEYQKFTNESLLWAPYRSNCYFGMRPRYVHESPLIMGIMWFNSLSQDGLHSLRHFATPQDKLQKYGWEVYDPRIGGKEVFIDEKNNLNLTVYFVKSKNGENWSVRVQGEPLDPKRPSTASVVLYFSQNGGEIDGKSSLAMIGHDGPNDMKFFGYSKELGEYHLTVKDNFGHYFKNPEYETMEVAPGSDCSKTSHLSLQIPDKEVWKARDVFQSLVSDSIRDILEKEETKQRPADLIPSVLTIRNLYNFNPGNFHYIQKTFDLTKKDGFQFDITYNKLGTTQSISTREQVTELITWSLNEINARFDKQFSFGEGPDSIESVEVKRRFALETLSNLLGGIGYFYGNQLIDRETEFDESQFTEIKLLNAKEEGPFELFTSVPSRGFFPRGFYWDEGFHLLQIMEYDFDLAFEILASWFEMIEDDSGWIAREIILGNEARSKVPQEFQVQNPNIANPPTLLLAFSEMLSRAIENIGDFNSDSYHQVMFNSRTAKFMTNNLEANPGLLTEYAKKIYPKLLKHYNWFRKSQTGLIDEYEEILEDEGIWDKIHKNEVYRWVGRTFTHCLPSGMDDYPRAQPPDVAELNVDALAWVGVMTRSMKQIAHVLKLTQDEQRYAQIEQEVVENLDLLHWSENDNCYCDISIDPEDDEIREFVCHEGYVSVLPFALKLIPKNSPKLEKVVALMSDPEKIFSDYGLLSLSRQDDYFGKDENYWRGPIWMNINYLCLDAMRYYYPEVILDVAGEASNAKKLYQSLKINLSNNIYKVWEEQGYCYENYSPIDGHGTGAEHFTGWTALVVNILGRF</sequence>
<reference key="1">
    <citation type="journal article" date="1996" name="J. Bacteriol.">
        <title>CWH41 encodes a novel endoplasmic reticulum membrane N-glycoprotein involved in beta 1,6-glucan assembly.</title>
        <authorList>
            <person name="Jiang B."/>
            <person name="Sheraton J."/>
            <person name="Ram A.F.J."/>
            <person name="Dijkgraaf G.J.P."/>
            <person name="Klis F.M."/>
            <person name="Bussey H."/>
        </authorList>
    </citation>
    <scope>NUCLEOTIDE SEQUENCE [GENOMIC DNA]</scope>
    <scope>SUBCELLULAR LOCATION</scope>
    <scope>GLYCOSYLATION</scope>
    <scope>FUNCTION</scope>
    <scope>DISRUPTION PHENOTYPE</scope>
</reference>
<reference key="2">
    <citation type="journal article" date="1997" name="Nature">
        <title>The nucleotide sequence of Saccharomyces cerevisiae chromosome VII.</title>
        <authorList>
            <person name="Tettelin H."/>
            <person name="Agostoni-Carbone M.L."/>
            <person name="Albermann K."/>
            <person name="Albers M."/>
            <person name="Arroyo J."/>
            <person name="Backes U."/>
            <person name="Barreiros T."/>
            <person name="Bertani I."/>
            <person name="Bjourson A.J."/>
            <person name="Brueckner M."/>
            <person name="Bruschi C.V."/>
            <person name="Carignani G."/>
            <person name="Castagnoli L."/>
            <person name="Cerdan E."/>
            <person name="Clemente M.L."/>
            <person name="Coblenz A."/>
            <person name="Coglievina M."/>
            <person name="Coissac E."/>
            <person name="Defoor E."/>
            <person name="Del Bino S."/>
            <person name="Delius H."/>
            <person name="Delneri D."/>
            <person name="de Wergifosse P."/>
            <person name="Dujon B."/>
            <person name="Durand P."/>
            <person name="Entian K.-D."/>
            <person name="Eraso P."/>
            <person name="Escribano V."/>
            <person name="Fabiani L."/>
            <person name="Fartmann B."/>
            <person name="Feroli F."/>
            <person name="Feuermann M."/>
            <person name="Frontali L."/>
            <person name="Garcia-Gonzalez M."/>
            <person name="Garcia-Saez M.I."/>
            <person name="Goffeau A."/>
            <person name="Guerreiro P."/>
            <person name="Hani J."/>
            <person name="Hansen M."/>
            <person name="Hebling U."/>
            <person name="Hernandez K."/>
            <person name="Heumann K."/>
            <person name="Hilger F."/>
            <person name="Hofmann B."/>
            <person name="Indge K.J."/>
            <person name="James C.M."/>
            <person name="Klima R."/>
            <person name="Koetter P."/>
            <person name="Kramer B."/>
            <person name="Kramer W."/>
            <person name="Lauquin G."/>
            <person name="Leuther H."/>
            <person name="Louis E.J."/>
            <person name="Maillier E."/>
            <person name="Marconi A."/>
            <person name="Martegani E."/>
            <person name="Mazon M.J."/>
            <person name="Mazzoni C."/>
            <person name="McReynolds A.D.K."/>
            <person name="Melchioretto P."/>
            <person name="Mewes H.-W."/>
            <person name="Minenkova O."/>
            <person name="Mueller-Auer S."/>
            <person name="Nawrocki A."/>
            <person name="Netter P."/>
            <person name="Neu R."/>
            <person name="Nombela C."/>
            <person name="Oliver S.G."/>
            <person name="Panzeri L."/>
            <person name="Paoluzi S."/>
            <person name="Plevani P."/>
            <person name="Portetelle D."/>
            <person name="Portillo F."/>
            <person name="Potier S."/>
            <person name="Purnelle B."/>
            <person name="Rieger M."/>
            <person name="Riles L."/>
            <person name="Rinaldi T."/>
            <person name="Robben J."/>
            <person name="Rodrigues-Pousada C."/>
            <person name="Rodriguez-Belmonte E."/>
            <person name="Rodriguez-Torres A.M."/>
            <person name="Rose M."/>
            <person name="Ruzzi M."/>
            <person name="Saliola M."/>
            <person name="Sanchez-Perez M."/>
            <person name="Schaefer B."/>
            <person name="Schaefer M."/>
            <person name="Scharfe M."/>
            <person name="Schmidheini T."/>
            <person name="Schreer A."/>
            <person name="Skala J."/>
            <person name="Souciet J.-L."/>
            <person name="Steensma H.Y."/>
            <person name="Talla E."/>
            <person name="Thierry A."/>
            <person name="Vandenbol M."/>
            <person name="van der Aart Q.J.M."/>
            <person name="Van Dyck L."/>
            <person name="Vanoni M."/>
            <person name="Verhasselt P."/>
            <person name="Voet M."/>
            <person name="Volckaert G."/>
            <person name="Wambutt R."/>
            <person name="Watson M.D."/>
            <person name="Weber N."/>
            <person name="Wedler E."/>
            <person name="Wedler H."/>
            <person name="Wipfli P."/>
            <person name="Wolf K."/>
            <person name="Wright L.F."/>
            <person name="Zaccaria P."/>
            <person name="Zimmermann M."/>
            <person name="Zollner A."/>
            <person name="Kleine K."/>
        </authorList>
    </citation>
    <scope>NUCLEOTIDE SEQUENCE [LARGE SCALE GENOMIC DNA]</scope>
    <source>
        <strain>ATCC 204508 / S288c</strain>
    </source>
</reference>
<reference key="3">
    <citation type="journal article" date="2014" name="G3 (Bethesda)">
        <title>The reference genome sequence of Saccharomyces cerevisiae: Then and now.</title>
        <authorList>
            <person name="Engel S.R."/>
            <person name="Dietrich F.S."/>
            <person name="Fisk D.G."/>
            <person name="Binkley G."/>
            <person name="Balakrishnan R."/>
            <person name="Costanzo M.C."/>
            <person name="Dwight S.S."/>
            <person name="Hitz B.C."/>
            <person name="Karra K."/>
            <person name="Nash R.S."/>
            <person name="Weng S."/>
            <person name="Wong E.D."/>
            <person name="Lloyd P."/>
            <person name="Skrzypek M.S."/>
            <person name="Miyasato S.R."/>
            <person name="Simison M."/>
            <person name="Cherry J.M."/>
        </authorList>
    </citation>
    <scope>GENOME REANNOTATION</scope>
    <source>
        <strain>ATCC 204508 / S288c</strain>
    </source>
</reference>
<reference key="4">
    <citation type="journal article" date="1997" name="Glycobiology">
        <title>The yeast CWH41 gene encodes glucosidase I.</title>
        <authorList>
            <person name="Romero P.A."/>
            <person name="Dijkgraaf G.J.P."/>
            <person name="Shahinian S."/>
            <person name="Herscovics A."/>
            <person name="Bussey H."/>
        </authorList>
    </citation>
    <scope>DISRUPTION PHENOTYPE</scope>
    <scope>FUNCTION</scope>
</reference>
<reference key="5">
    <citation type="journal article" date="2003" name="Nature">
        <title>Global analysis of protein expression in yeast.</title>
        <authorList>
            <person name="Ghaemmaghami S."/>
            <person name="Huh W.-K."/>
            <person name="Bower K."/>
            <person name="Howson R.W."/>
            <person name="Belle A."/>
            <person name="Dephoure N."/>
            <person name="O'Shea E.K."/>
            <person name="Weissman J.S."/>
        </authorList>
    </citation>
    <scope>LEVEL OF PROTEIN EXPRESSION [LARGE SCALE ANALYSIS]</scope>
</reference>
<reference key="6">
    <citation type="journal article" date="2013" name="J. Biol. Chem.">
        <title>Specificity of processing alpha-glucosidase I is guided by the substrate conformation: crystallographic and in silico studies.</title>
        <authorList>
            <person name="Barker M.K."/>
            <person name="Rose D.R."/>
        </authorList>
    </citation>
    <scope>X-RAY CRYSTALLOGRAPHY (2.04 ANGSTROMS) OF 35-833</scope>
    <scope>DISULFIDE BOND</scope>
    <scope>CATALYTIC ACTIVITY</scope>
    <scope>ACTIVE SITE</scope>
    <scope>SUBSTRATE-BINDING</scope>
    <scope>MUTAGENESIS OF ASP-601 AND GLU-804</scope>
    <scope>ACTIVITY REGULATION</scope>
</reference>
<dbReference type="EC" id="3.2.1.106" evidence="3"/>
<dbReference type="EMBL" id="U35669">
    <property type="protein sequence ID" value="AAC49157.1"/>
    <property type="molecule type" value="Genomic_DNA"/>
</dbReference>
<dbReference type="EMBL" id="Z72549">
    <property type="protein sequence ID" value="CAA96728.1"/>
    <property type="molecule type" value="Genomic_DNA"/>
</dbReference>
<dbReference type="EMBL" id="BK006941">
    <property type="protein sequence ID" value="DAA08072.1"/>
    <property type="molecule type" value="Genomic_DNA"/>
</dbReference>
<dbReference type="PIR" id="S62136">
    <property type="entry name" value="S62136"/>
</dbReference>
<dbReference type="RefSeq" id="NP_011488.1">
    <property type="nucleotide sequence ID" value="NM_001180892.1"/>
</dbReference>
<dbReference type="PDB" id="4J5T">
    <property type="method" value="X-ray"/>
    <property type="resolution" value="2.04 A"/>
    <property type="chains" value="A=35-833"/>
</dbReference>
<dbReference type="PDBsum" id="4J5T"/>
<dbReference type="SMR" id="P53008"/>
<dbReference type="BioGRID" id="33220">
    <property type="interactions" value="208"/>
</dbReference>
<dbReference type="DIP" id="DIP-5301N"/>
<dbReference type="FunCoup" id="P53008">
    <property type="interactions" value="724"/>
</dbReference>
<dbReference type="IntAct" id="P53008">
    <property type="interactions" value="1"/>
</dbReference>
<dbReference type="MINT" id="P53008"/>
<dbReference type="STRING" id="4932.YGL027C"/>
<dbReference type="BindingDB" id="P53008"/>
<dbReference type="CAZy" id="GH63">
    <property type="family name" value="Glycoside Hydrolase Family 63"/>
</dbReference>
<dbReference type="GlyCosmos" id="P53008">
    <property type="glycosylation" value="4 sites, No reported glycans"/>
</dbReference>
<dbReference type="GlyGen" id="P53008">
    <property type="glycosylation" value="4 sites"/>
</dbReference>
<dbReference type="iPTMnet" id="P53008"/>
<dbReference type="PaxDb" id="4932-YGL027C"/>
<dbReference type="PeptideAtlas" id="P53008"/>
<dbReference type="EnsemblFungi" id="YGL027C_mRNA">
    <property type="protein sequence ID" value="YGL027C"/>
    <property type="gene ID" value="YGL027C"/>
</dbReference>
<dbReference type="GeneID" id="852857"/>
<dbReference type="KEGG" id="sce:YGL027C"/>
<dbReference type="AGR" id="SGD:S000002995"/>
<dbReference type="SGD" id="S000002995">
    <property type="gene designation" value="CWH41"/>
</dbReference>
<dbReference type="VEuPathDB" id="FungiDB:YGL027C"/>
<dbReference type="eggNOG" id="KOG2161">
    <property type="taxonomic scope" value="Eukaryota"/>
</dbReference>
<dbReference type="GeneTree" id="ENSGT00390000017452"/>
<dbReference type="HOGENOM" id="CLU_007380_2_0_1"/>
<dbReference type="InParanoid" id="P53008"/>
<dbReference type="OMA" id="FNWYNTT"/>
<dbReference type="OrthoDB" id="410058at2759"/>
<dbReference type="BioCyc" id="MetaCyc:YGL027C-MONOMER"/>
<dbReference type="BioCyc" id="YEAST:YGL027C-MONOMER"/>
<dbReference type="UniPathway" id="UPA00280"/>
<dbReference type="BioGRID-ORCS" id="852857">
    <property type="hits" value="9 hits in 10 CRISPR screens"/>
</dbReference>
<dbReference type="EvolutionaryTrace" id="P53008"/>
<dbReference type="PRO" id="PR:P53008"/>
<dbReference type="Proteomes" id="UP000002311">
    <property type="component" value="Chromosome VII"/>
</dbReference>
<dbReference type="RNAct" id="P53008">
    <property type="molecule type" value="protein"/>
</dbReference>
<dbReference type="GO" id="GO:0005789">
    <property type="term" value="C:endoplasmic reticulum membrane"/>
    <property type="evidence" value="ECO:0000314"/>
    <property type="project" value="SGD"/>
</dbReference>
<dbReference type="GO" id="GO:0000324">
    <property type="term" value="C:fungal-type vacuole"/>
    <property type="evidence" value="ECO:0007005"/>
    <property type="project" value="SGD"/>
</dbReference>
<dbReference type="GO" id="GO:0004573">
    <property type="term" value="F:Glc3Man9GlcNAc2 oligosaccharide glucosidase activity"/>
    <property type="evidence" value="ECO:0000314"/>
    <property type="project" value="SGD"/>
</dbReference>
<dbReference type="GO" id="GO:0070880">
    <property type="term" value="P:fungal-type cell wall beta-glucan biosynthetic process"/>
    <property type="evidence" value="ECO:0000316"/>
    <property type="project" value="SGD"/>
</dbReference>
<dbReference type="GO" id="GO:0009272">
    <property type="term" value="P:fungal-type cell wall biogenesis"/>
    <property type="evidence" value="ECO:0000315"/>
    <property type="project" value="SGD"/>
</dbReference>
<dbReference type="GO" id="GO:0009311">
    <property type="term" value="P:oligosaccharide metabolic process"/>
    <property type="evidence" value="ECO:0007669"/>
    <property type="project" value="InterPro"/>
</dbReference>
<dbReference type="GO" id="GO:0006487">
    <property type="term" value="P:protein N-linked glycosylation"/>
    <property type="evidence" value="ECO:0000315"/>
    <property type="project" value="SGD"/>
</dbReference>
<dbReference type="FunFam" id="1.50.10.10:FF:000027">
    <property type="entry name" value="Probable mannosyl-oligosaccharide glucosidase"/>
    <property type="match status" value="1"/>
</dbReference>
<dbReference type="Gene3D" id="1.50.10.10">
    <property type="match status" value="1"/>
</dbReference>
<dbReference type="Gene3D" id="2.70.98.110">
    <property type="entry name" value="Glycosyl hydrolase family 63, N-terminal domain"/>
    <property type="match status" value="1"/>
</dbReference>
<dbReference type="InterPro" id="IPR008928">
    <property type="entry name" value="6-hairpin_glycosidase_sf"/>
</dbReference>
<dbReference type="InterPro" id="IPR012341">
    <property type="entry name" value="6hp_glycosidase-like_sf"/>
</dbReference>
<dbReference type="InterPro" id="IPR031335">
    <property type="entry name" value="Glyco_hydro_63_C"/>
</dbReference>
<dbReference type="InterPro" id="IPR031631">
    <property type="entry name" value="Glyco_hydro_63N"/>
</dbReference>
<dbReference type="InterPro" id="IPR038518">
    <property type="entry name" value="Glyco_hydro_63N_sf"/>
</dbReference>
<dbReference type="InterPro" id="IPR004888">
    <property type="entry name" value="Glycoside_hydrolase_63"/>
</dbReference>
<dbReference type="PANTHER" id="PTHR10412">
    <property type="entry name" value="MANNOSYL-OLIGOSACCHARIDE GLUCOSIDASE"/>
    <property type="match status" value="1"/>
</dbReference>
<dbReference type="PANTHER" id="PTHR10412:SF11">
    <property type="entry name" value="MANNOSYL-OLIGOSACCHARIDE GLUCOSIDASE"/>
    <property type="match status" value="1"/>
</dbReference>
<dbReference type="Pfam" id="PF03200">
    <property type="entry name" value="Glyco_hydro_63"/>
    <property type="match status" value="1"/>
</dbReference>
<dbReference type="Pfam" id="PF16923">
    <property type="entry name" value="Glyco_hydro_63N"/>
    <property type="match status" value="1"/>
</dbReference>
<dbReference type="SUPFAM" id="SSF48208">
    <property type="entry name" value="Six-hairpin glycosidases"/>
    <property type="match status" value="1"/>
</dbReference>
<comment type="function">
    <text evidence="4 5">Cleaves the distal alpha 1,2-linked glucose residue from the Glc(3)Man(9)GlcNAc(2) oligosaccharide precursor highly specifically (PubMed:9363442). Seems to play a role in beta-1,6-glucan synthesis (PubMed:8576053).</text>
</comment>
<comment type="catalytic activity">
    <reaction evidence="3">
        <text>N(4)-(alpha-D-Glc-(1-&gt;2)-alpha-D-Glc-(1-&gt;3)-alpha-D-Glc-(1-&gt;3)-alpha-D-Man-(1-&gt;2)-alpha-D-Man-(1-&gt;2)-alpha-D-Man-(1-&gt;3)-[alpha-D-Man-(1-&gt;2)-alpha-D-Man-(1-&gt;3)-[alpha-D-Man-(1-&gt;2)-alpha-D-Man-(1-&gt;6)]-alpha-D-Man-(1-&gt;6)]-beta-D-Man-(1-&gt;4)-beta-D-GlcNAc-(1-&gt;4)-beta-D-GlcNAc)-L-asparaginyl-[protein] + H2O = N(4)-(alpha-D-Glc-(1-&gt;3)-alpha-D-Glc-(1-&gt;3)-alpha-D-Man-(1-&gt;2)-alpha-D-Man-(1-&gt;2)-alpha-D-Man-(1-&gt;3)-[alpha-D-Man-(1-&gt;2)-alpha-D-Man-(1-&gt;3)-[alpha-D-Man-(1-&gt;2)-alpha-D-Man-(1-&gt;6)]-alpha-D-Man-(1-&gt;6)]-beta-D-Man-(1-&gt;4)-beta-D-GlcNAc-(1-&gt;4)-beta-D-GlcNAc)-L-asparaginyl-[protein] + beta-D-glucose</text>
        <dbReference type="Rhea" id="RHEA:55988"/>
        <dbReference type="Rhea" id="RHEA-COMP:12806"/>
        <dbReference type="Rhea" id="RHEA-COMP:14355"/>
        <dbReference type="ChEBI" id="CHEBI:15377"/>
        <dbReference type="ChEBI" id="CHEBI:15903"/>
        <dbReference type="ChEBI" id="CHEBI:59082"/>
        <dbReference type="ChEBI" id="CHEBI:132537"/>
        <dbReference type="EC" id="3.2.1.106"/>
    </reaction>
</comment>
<comment type="activity regulation">
    <text evidence="3">Miglitol is an effective inhibitor at 1 mM.</text>
</comment>
<comment type="pathway">
    <text evidence="7">Glycan metabolism; N-glycan degradation.</text>
</comment>
<comment type="subcellular location">
    <subcellularLocation>
        <location evidence="4">Endoplasmic reticulum membrane</location>
        <topology evidence="4">Single-pass type II membrane protein</topology>
    </subcellularLocation>
</comment>
<comment type="PTM">
    <text evidence="4">N-glycosylated.</text>
</comment>
<comment type="disruption phenotype">
    <text evidence="4 5">Displays phenotypes characteristic of cell wall defects such as hypersensitivity to calcofluor white and resistance to K1 killer toxin, and results in a 50% reduction of cell wall beta-1,6-glucan level (PubMed:9363442). Abolishes glucosidase I activity (PubMed:9363442).</text>
</comment>
<comment type="miscellaneous">
    <text evidence="2">Present with 2840 molecules/cell in log phase SD medium.</text>
</comment>
<comment type="similarity">
    <text evidence="7">Belongs to the glycosyl hydrolase 63 family.</text>
</comment>
<evidence type="ECO:0000255" key="1"/>
<evidence type="ECO:0000269" key="2">
    <source>
    </source>
</evidence>
<evidence type="ECO:0000269" key="3">
    <source>
    </source>
</evidence>
<evidence type="ECO:0000269" key="4">
    <source>
    </source>
</evidence>
<evidence type="ECO:0000269" key="5">
    <source>
    </source>
</evidence>
<evidence type="ECO:0000303" key="6">
    <source>
    </source>
</evidence>
<evidence type="ECO:0000305" key="7"/>
<evidence type="ECO:0007829" key="8">
    <source>
        <dbReference type="PDB" id="4J5T"/>
    </source>
</evidence>
<keyword id="KW-0002">3D-structure</keyword>
<keyword id="KW-1015">Disulfide bond</keyword>
<keyword id="KW-0256">Endoplasmic reticulum</keyword>
<keyword id="KW-0325">Glycoprotein</keyword>
<keyword id="KW-0326">Glycosidase</keyword>
<keyword id="KW-0378">Hydrolase</keyword>
<keyword id="KW-0472">Membrane</keyword>
<keyword id="KW-1185">Reference proteome</keyword>
<keyword id="KW-0735">Signal-anchor</keyword>
<keyword id="KW-0812">Transmembrane</keyword>
<keyword id="KW-1133">Transmembrane helix</keyword>
<feature type="chain" id="PRO_0000057713" description="Mannosyl-oligosaccharide glucosidase">
    <location>
        <begin position="1"/>
        <end position="833"/>
    </location>
</feature>
<feature type="topological domain" description="Cytoplasmic" evidence="1">
    <location>
        <begin position="1"/>
        <end position="10"/>
    </location>
</feature>
<feature type="transmembrane region" description="Helical; Signal-anchor for type II membrane protein" evidence="1">
    <location>
        <begin position="11"/>
        <end position="28"/>
    </location>
</feature>
<feature type="topological domain" description="Lumenal" evidence="1">
    <location>
        <begin position="29"/>
        <end position="833"/>
    </location>
</feature>
<feature type="active site" description="Proton donor" evidence="3">
    <location>
        <position position="601"/>
    </location>
</feature>
<feature type="active site" description="Proton acceptor" evidence="3">
    <location>
        <position position="804"/>
    </location>
</feature>
<feature type="binding site" evidence="3">
    <location>
        <position position="42"/>
    </location>
    <ligand>
        <name>substrate</name>
    </ligand>
</feature>
<feature type="binding site" evidence="3">
    <location>
        <position position="122"/>
    </location>
    <ligand>
        <name>substrate</name>
    </ligand>
</feature>
<feature type="binding site" evidence="3">
    <location>
        <position position="143"/>
    </location>
    <ligand>
        <name>substrate</name>
    </ligand>
</feature>
<feature type="glycosylation site" description="N-linked (GlcNAc...) asparagine" evidence="1">
    <location>
        <position position="42"/>
    </location>
</feature>
<feature type="glycosylation site" description="N-linked (GlcNAc...) asparagine" evidence="1">
    <location>
        <position position="122"/>
    </location>
</feature>
<feature type="glycosylation site" description="N-linked (GlcNAc...) asparagine" evidence="1">
    <location>
        <position position="135"/>
    </location>
</feature>
<feature type="glycosylation site" description="N-linked (GlcNAc...) asparagine" evidence="1">
    <location>
        <position position="787"/>
    </location>
</feature>
<feature type="disulfide bond" evidence="3">
    <location>
        <begin position="669"/>
        <end position="685"/>
    </location>
</feature>
<feature type="mutagenesis site" description="Abrogates catalytic activity." evidence="3">
    <original>D</original>
    <variation>A</variation>
    <variation>N</variation>
    <location>
        <position position="601"/>
    </location>
</feature>
<feature type="mutagenesis site" description="Abrogates catalytic activity." evidence="3">
    <original>E</original>
    <variation>A</variation>
    <variation>N</variation>
    <location>
        <position position="804"/>
    </location>
</feature>
<feature type="helix" evidence="8">
    <location>
        <begin position="35"/>
        <end position="45"/>
    </location>
</feature>
<feature type="strand" evidence="8">
    <location>
        <begin position="46"/>
        <end position="49"/>
    </location>
</feature>
<feature type="strand" evidence="8">
    <location>
        <begin position="54"/>
        <end position="59"/>
    </location>
</feature>
<feature type="strand" evidence="8">
    <location>
        <begin position="68"/>
        <end position="75"/>
    </location>
</feature>
<feature type="helix" evidence="8">
    <location>
        <begin position="82"/>
        <end position="85"/>
    </location>
</feature>
<feature type="helix" evidence="8">
    <location>
        <begin position="92"/>
        <end position="94"/>
    </location>
</feature>
<feature type="strand" evidence="8">
    <location>
        <begin position="97"/>
        <end position="105"/>
    </location>
</feature>
<feature type="turn" evidence="8">
    <location>
        <begin position="106"/>
        <end position="108"/>
    </location>
</feature>
<feature type="strand" evidence="8">
    <location>
        <begin position="109"/>
        <end position="116"/>
    </location>
</feature>
<feature type="turn" evidence="8">
    <location>
        <begin position="117"/>
        <end position="120"/>
    </location>
</feature>
<feature type="strand" evidence="8">
    <location>
        <begin position="121"/>
        <end position="129"/>
    </location>
</feature>
<feature type="strand" evidence="8">
    <location>
        <begin position="136"/>
        <end position="146"/>
    </location>
</feature>
<feature type="strand" evidence="8">
    <location>
        <begin position="152"/>
        <end position="161"/>
    </location>
</feature>
<feature type="helix" evidence="8">
    <location>
        <begin position="164"/>
        <end position="167"/>
    </location>
</feature>
<feature type="strand" evidence="8">
    <location>
        <begin position="171"/>
        <end position="181"/>
    </location>
</feature>
<feature type="strand" evidence="8">
    <location>
        <begin position="183"/>
        <end position="189"/>
    </location>
</feature>
<feature type="turn" evidence="8">
    <location>
        <begin position="190"/>
        <end position="192"/>
    </location>
</feature>
<feature type="strand" evidence="8">
    <location>
        <begin position="193"/>
        <end position="203"/>
    </location>
</feature>
<feature type="strand" evidence="8">
    <location>
        <begin position="227"/>
        <end position="231"/>
    </location>
</feature>
<feature type="helix" evidence="8">
    <location>
        <begin position="235"/>
        <end position="240"/>
    </location>
</feature>
<feature type="helix" evidence="8">
    <location>
        <begin position="241"/>
        <end position="256"/>
    </location>
</feature>
<feature type="helix" evidence="8">
    <location>
        <begin position="267"/>
        <end position="269"/>
    </location>
</feature>
<feature type="helix" evidence="8">
    <location>
        <begin position="270"/>
        <end position="273"/>
    </location>
</feature>
<feature type="strand" evidence="8">
    <location>
        <begin position="286"/>
        <end position="295"/>
    </location>
</feature>
<feature type="strand" evidence="8">
    <location>
        <begin position="302"/>
        <end position="310"/>
    </location>
</feature>
<feature type="helix" evidence="8">
    <location>
        <begin position="320"/>
        <end position="341"/>
    </location>
</feature>
<feature type="helix" evidence="8">
    <location>
        <begin position="354"/>
        <end position="370"/>
    </location>
</feature>
<feature type="strand" evidence="8">
    <location>
        <begin position="373"/>
        <end position="381"/>
    </location>
</feature>
<feature type="strand" evidence="8">
    <location>
        <begin position="401"/>
        <end position="410"/>
    </location>
</feature>
<feature type="turn" evidence="8">
    <location>
        <begin position="415"/>
        <end position="417"/>
    </location>
</feature>
<feature type="strand" evidence="8">
    <location>
        <begin position="420"/>
        <end position="422"/>
    </location>
</feature>
<feature type="helix" evidence="8">
    <location>
        <begin position="423"/>
        <end position="436"/>
    </location>
</feature>
<feature type="helix" evidence="8">
    <location>
        <begin position="438"/>
        <end position="449"/>
    </location>
</feature>
<feature type="strand" evidence="8">
    <location>
        <begin position="461"/>
        <end position="463"/>
    </location>
</feature>
<feature type="helix" evidence="8">
    <location>
        <begin position="466"/>
        <end position="470"/>
    </location>
</feature>
<feature type="helix" evidence="8">
    <location>
        <begin position="475"/>
        <end position="477"/>
    </location>
</feature>
<feature type="helix" evidence="8">
    <location>
        <begin position="489"/>
        <end position="505"/>
    </location>
</feature>
<feature type="helix" evidence="8">
    <location>
        <begin position="529"/>
        <end position="532"/>
    </location>
</feature>
<feature type="helix" evidence="8">
    <location>
        <begin position="534"/>
        <end position="558"/>
    </location>
</feature>
<feature type="helix" evidence="8">
    <location>
        <begin position="567"/>
        <end position="572"/>
    </location>
</feature>
<feature type="helix" evidence="8">
    <location>
        <begin position="576"/>
        <end position="578"/>
    </location>
</feature>
<feature type="helix" evidence="8">
    <location>
        <begin position="596"/>
        <end position="598"/>
    </location>
</feature>
<feature type="helix" evidence="8">
    <location>
        <begin position="616"/>
        <end position="635"/>
    </location>
</feature>
<feature type="helix" evidence="8">
    <location>
        <begin position="639"/>
        <end position="658"/>
    </location>
</feature>
<feature type="turn" evidence="8">
    <location>
        <begin position="663"/>
        <end position="666"/>
    </location>
</feature>
<feature type="strand" evidence="8">
    <location>
        <begin position="670"/>
        <end position="673"/>
    </location>
</feature>
<feature type="turn" evidence="8">
    <location>
        <begin position="675"/>
        <end position="677"/>
    </location>
</feature>
<feature type="strand" evidence="8">
    <location>
        <begin position="681"/>
        <end position="684"/>
    </location>
</feature>
<feature type="helix" evidence="8">
    <location>
        <begin position="689"/>
        <end position="696"/>
    </location>
</feature>
<feature type="helix" evidence="8">
    <location>
        <begin position="706"/>
        <end position="715"/>
    </location>
</feature>
<feature type="turn" evidence="8">
    <location>
        <begin position="717"/>
        <end position="720"/>
    </location>
</feature>
<feature type="strand" evidence="8">
    <location>
        <begin position="725"/>
        <end position="729"/>
    </location>
</feature>
<feature type="turn" evidence="8">
    <location>
        <begin position="734"/>
        <end position="737"/>
    </location>
</feature>
<feature type="strand" evidence="8">
    <location>
        <begin position="742"/>
        <end position="745"/>
    </location>
</feature>
<feature type="helix" evidence="8">
    <location>
        <begin position="749"/>
        <end position="762"/>
    </location>
</feature>
<feature type="helix" evidence="8">
    <location>
        <begin position="764"/>
        <end position="767"/>
    </location>
</feature>
<feature type="helix" evidence="8">
    <location>
        <begin position="776"/>
        <end position="798"/>
    </location>
</feature>
<feature type="strand" evidence="8">
    <location>
        <begin position="804"/>
        <end position="806"/>
    </location>
</feature>
<feature type="turn" evidence="8">
    <location>
        <begin position="808"/>
        <end position="810"/>
    </location>
</feature>
<feature type="strand" evidence="8">
    <location>
        <begin position="813"/>
        <end position="818"/>
    </location>
</feature>
<feature type="helix" evidence="8">
    <location>
        <begin position="822"/>
        <end position="825"/>
    </location>
</feature>
<feature type="helix" evidence="8">
    <location>
        <begin position="826"/>
        <end position="831"/>
    </location>
</feature>
<protein>
    <recommendedName>
        <fullName evidence="7">Mannosyl-oligosaccharide glucosidase</fullName>
        <ecNumber evidence="3">3.2.1.106</ecNumber>
    </recommendedName>
    <alternativeName>
        <fullName evidence="7">Processing A-glucosidase I</fullName>
        <shortName evidence="6">Glucosidase I</shortName>
    </alternativeName>
</protein>
<name>CWH41_YEAST</name>
<gene>
    <name type="primary">CWH41</name>
    <name type="synonym">GLS1</name>
    <name type="ordered locus">YGL027C</name>
</gene>